<accession>Q31AT8</accession>
<feature type="chain" id="PRO_0000296529" description="Large ribosomal subunit protein bL32">
    <location>
        <begin position="1"/>
        <end position="56"/>
    </location>
</feature>
<feature type="region of interest" description="Disordered" evidence="2">
    <location>
        <begin position="1"/>
        <end position="21"/>
    </location>
</feature>
<feature type="compositionally biased region" description="Basic residues" evidence="2">
    <location>
        <begin position="1"/>
        <end position="20"/>
    </location>
</feature>
<dbReference type="EMBL" id="CP000111">
    <property type="protein sequence ID" value="ABB50007.1"/>
    <property type="molecule type" value="Genomic_DNA"/>
</dbReference>
<dbReference type="RefSeq" id="WP_011376499.1">
    <property type="nucleotide sequence ID" value="NC_007577.1"/>
</dbReference>
<dbReference type="SMR" id="Q31AT8"/>
<dbReference type="STRING" id="74546.PMT9312_0947"/>
<dbReference type="KEGG" id="pmi:PMT9312_0947"/>
<dbReference type="eggNOG" id="COG0333">
    <property type="taxonomic scope" value="Bacteria"/>
</dbReference>
<dbReference type="HOGENOM" id="CLU_199882_0_0_3"/>
<dbReference type="Proteomes" id="UP000002715">
    <property type="component" value="Chromosome"/>
</dbReference>
<dbReference type="GO" id="GO:0015934">
    <property type="term" value="C:large ribosomal subunit"/>
    <property type="evidence" value="ECO:0007669"/>
    <property type="project" value="InterPro"/>
</dbReference>
<dbReference type="GO" id="GO:0003735">
    <property type="term" value="F:structural constituent of ribosome"/>
    <property type="evidence" value="ECO:0007669"/>
    <property type="project" value="InterPro"/>
</dbReference>
<dbReference type="GO" id="GO:0006412">
    <property type="term" value="P:translation"/>
    <property type="evidence" value="ECO:0007669"/>
    <property type="project" value="UniProtKB-UniRule"/>
</dbReference>
<dbReference type="HAMAP" id="MF_00340">
    <property type="entry name" value="Ribosomal_bL32"/>
    <property type="match status" value="1"/>
</dbReference>
<dbReference type="InterPro" id="IPR002677">
    <property type="entry name" value="Ribosomal_bL32"/>
</dbReference>
<dbReference type="InterPro" id="IPR044958">
    <property type="entry name" value="Ribosomal_bL32_plant/cyanobact"/>
</dbReference>
<dbReference type="InterPro" id="IPR011332">
    <property type="entry name" value="Ribosomal_zn-bd"/>
</dbReference>
<dbReference type="NCBIfam" id="TIGR01031">
    <property type="entry name" value="rpmF_bact"/>
    <property type="match status" value="1"/>
</dbReference>
<dbReference type="PANTHER" id="PTHR36083">
    <property type="entry name" value="50S RIBOSOMAL PROTEIN L32, CHLOROPLASTIC"/>
    <property type="match status" value="1"/>
</dbReference>
<dbReference type="PANTHER" id="PTHR36083:SF1">
    <property type="entry name" value="LARGE RIBOSOMAL SUBUNIT PROTEIN BL32C"/>
    <property type="match status" value="1"/>
</dbReference>
<dbReference type="Pfam" id="PF01783">
    <property type="entry name" value="Ribosomal_L32p"/>
    <property type="match status" value="1"/>
</dbReference>
<dbReference type="SUPFAM" id="SSF57829">
    <property type="entry name" value="Zn-binding ribosomal proteins"/>
    <property type="match status" value="1"/>
</dbReference>
<reference key="1">
    <citation type="journal article" date="2006" name="Science">
        <title>Genomic islands and the ecology and evolution of Prochlorococcus.</title>
        <authorList>
            <person name="Coleman M.L."/>
            <person name="Sullivan M.B."/>
            <person name="Martiny A.C."/>
            <person name="Steglich C."/>
            <person name="Barry K."/>
            <person name="Delong E.F."/>
            <person name="Chisholm S.W."/>
        </authorList>
    </citation>
    <scope>NUCLEOTIDE SEQUENCE [LARGE SCALE GENOMIC DNA]</scope>
    <source>
        <strain>MIT 9312</strain>
    </source>
</reference>
<organism>
    <name type="scientific">Prochlorococcus marinus (strain MIT 9312)</name>
    <dbReference type="NCBI Taxonomy" id="74546"/>
    <lineage>
        <taxon>Bacteria</taxon>
        <taxon>Bacillati</taxon>
        <taxon>Cyanobacteriota</taxon>
        <taxon>Cyanophyceae</taxon>
        <taxon>Synechococcales</taxon>
        <taxon>Prochlorococcaceae</taxon>
        <taxon>Prochlorococcus</taxon>
    </lineage>
</organism>
<protein>
    <recommendedName>
        <fullName evidence="1">Large ribosomal subunit protein bL32</fullName>
    </recommendedName>
    <alternativeName>
        <fullName evidence="3">50S ribosomal protein L32</fullName>
    </alternativeName>
</protein>
<evidence type="ECO:0000255" key="1">
    <source>
        <dbReference type="HAMAP-Rule" id="MF_00340"/>
    </source>
</evidence>
<evidence type="ECO:0000256" key="2">
    <source>
        <dbReference type="SAM" id="MobiDB-lite"/>
    </source>
</evidence>
<evidence type="ECO:0000305" key="3"/>
<sequence length="56" mass="6190">MAVPKKKKSKSKRNHRHAVWKGKAAIAAQKAISLGKSVLTGKAQGFVYPIEEEEEE</sequence>
<proteinExistence type="inferred from homology"/>
<gene>
    <name evidence="1" type="primary">rpmF</name>
    <name evidence="1" type="synonym">rpl32</name>
    <name type="ordered locus">PMT9312_0947</name>
</gene>
<comment type="similarity">
    <text evidence="1">Belongs to the bacterial ribosomal protein bL32 family.</text>
</comment>
<keyword id="KW-0687">Ribonucleoprotein</keyword>
<keyword id="KW-0689">Ribosomal protein</keyword>
<name>RL32_PROM9</name>